<accession>B7MYF0</accession>
<evidence type="ECO:0000255" key="1">
    <source>
        <dbReference type="HAMAP-Rule" id="MF_00159"/>
    </source>
</evidence>
<keyword id="KW-0004">4Fe-4S</keyword>
<keyword id="KW-0408">Iron</keyword>
<keyword id="KW-0411">Iron-sulfur</keyword>
<keyword id="KW-0414">Isoprene biosynthesis</keyword>
<keyword id="KW-0479">Metal-binding</keyword>
<keyword id="KW-0560">Oxidoreductase</keyword>
<dbReference type="EC" id="1.17.7.3" evidence="1"/>
<dbReference type="EMBL" id="CU928162">
    <property type="protein sequence ID" value="CAR09116.2"/>
    <property type="molecule type" value="Genomic_DNA"/>
</dbReference>
<dbReference type="RefSeq" id="WP_000551807.1">
    <property type="nucleotide sequence ID" value="NC_011745.1"/>
</dbReference>
<dbReference type="SMR" id="B7MYF0"/>
<dbReference type="GeneID" id="86947404"/>
<dbReference type="KEGG" id="ecq:ECED1_2946"/>
<dbReference type="HOGENOM" id="CLU_042258_0_0_6"/>
<dbReference type="UniPathway" id="UPA00056">
    <property type="reaction ID" value="UER00096"/>
</dbReference>
<dbReference type="Proteomes" id="UP000000748">
    <property type="component" value="Chromosome"/>
</dbReference>
<dbReference type="GO" id="GO:0051539">
    <property type="term" value="F:4 iron, 4 sulfur cluster binding"/>
    <property type="evidence" value="ECO:0007669"/>
    <property type="project" value="UniProtKB-UniRule"/>
</dbReference>
<dbReference type="GO" id="GO:0046429">
    <property type="term" value="F:4-hydroxy-3-methylbut-2-en-1-yl diphosphate synthase activity (ferredoxin)"/>
    <property type="evidence" value="ECO:0007669"/>
    <property type="project" value="UniProtKB-UniRule"/>
</dbReference>
<dbReference type="GO" id="GO:0141197">
    <property type="term" value="F:4-hydroxy-3-methylbut-2-enyl-diphosphate synthase activity (flavodoxin)"/>
    <property type="evidence" value="ECO:0007669"/>
    <property type="project" value="UniProtKB-EC"/>
</dbReference>
<dbReference type="GO" id="GO:0005506">
    <property type="term" value="F:iron ion binding"/>
    <property type="evidence" value="ECO:0007669"/>
    <property type="project" value="InterPro"/>
</dbReference>
<dbReference type="GO" id="GO:0019288">
    <property type="term" value="P:isopentenyl diphosphate biosynthetic process, methylerythritol 4-phosphate pathway"/>
    <property type="evidence" value="ECO:0007669"/>
    <property type="project" value="UniProtKB-UniRule"/>
</dbReference>
<dbReference type="GO" id="GO:0016114">
    <property type="term" value="P:terpenoid biosynthetic process"/>
    <property type="evidence" value="ECO:0007669"/>
    <property type="project" value="InterPro"/>
</dbReference>
<dbReference type="FunFam" id="3.20.20.20:FF:000001">
    <property type="entry name" value="4-hydroxy-3-methylbut-2-en-1-yl diphosphate synthase (flavodoxin)"/>
    <property type="match status" value="1"/>
</dbReference>
<dbReference type="FunFam" id="3.30.413.10:FF:000002">
    <property type="entry name" value="4-hydroxy-3-methylbut-2-en-1-yl diphosphate synthase (flavodoxin)"/>
    <property type="match status" value="1"/>
</dbReference>
<dbReference type="Gene3D" id="3.20.20.20">
    <property type="entry name" value="Dihydropteroate synthase-like"/>
    <property type="match status" value="1"/>
</dbReference>
<dbReference type="Gene3D" id="3.30.413.10">
    <property type="entry name" value="Sulfite Reductase Hemoprotein, domain 1"/>
    <property type="match status" value="1"/>
</dbReference>
<dbReference type="HAMAP" id="MF_00159">
    <property type="entry name" value="IspG"/>
    <property type="match status" value="1"/>
</dbReference>
<dbReference type="InterPro" id="IPR011005">
    <property type="entry name" value="Dihydropteroate_synth-like_sf"/>
</dbReference>
<dbReference type="InterPro" id="IPR016425">
    <property type="entry name" value="IspG_bac"/>
</dbReference>
<dbReference type="InterPro" id="IPR004588">
    <property type="entry name" value="IspG_bac-typ"/>
</dbReference>
<dbReference type="InterPro" id="IPR045854">
    <property type="entry name" value="NO2/SO3_Rdtase_4Fe4S_sf"/>
</dbReference>
<dbReference type="NCBIfam" id="TIGR00612">
    <property type="entry name" value="ispG_gcpE"/>
    <property type="match status" value="1"/>
</dbReference>
<dbReference type="NCBIfam" id="NF001540">
    <property type="entry name" value="PRK00366.1"/>
    <property type="match status" value="1"/>
</dbReference>
<dbReference type="PANTHER" id="PTHR30454">
    <property type="entry name" value="4-HYDROXY-3-METHYLBUT-2-EN-1-YL DIPHOSPHATE SYNTHASE"/>
    <property type="match status" value="1"/>
</dbReference>
<dbReference type="PANTHER" id="PTHR30454:SF0">
    <property type="entry name" value="4-HYDROXY-3-METHYLBUT-2-EN-1-YL DIPHOSPHATE SYNTHASE (FERREDOXIN), CHLOROPLASTIC"/>
    <property type="match status" value="1"/>
</dbReference>
<dbReference type="Pfam" id="PF04551">
    <property type="entry name" value="GcpE"/>
    <property type="match status" value="1"/>
</dbReference>
<dbReference type="PIRSF" id="PIRSF004640">
    <property type="entry name" value="IspG"/>
    <property type="match status" value="1"/>
</dbReference>
<dbReference type="SUPFAM" id="SSF51717">
    <property type="entry name" value="Dihydropteroate synthetase-like"/>
    <property type="match status" value="1"/>
</dbReference>
<dbReference type="SUPFAM" id="SSF56014">
    <property type="entry name" value="Nitrite and sulphite reductase 4Fe-4S domain-like"/>
    <property type="match status" value="1"/>
</dbReference>
<reference key="1">
    <citation type="journal article" date="2009" name="PLoS Genet.">
        <title>Organised genome dynamics in the Escherichia coli species results in highly diverse adaptive paths.</title>
        <authorList>
            <person name="Touchon M."/>
            <person name="Hoede C."/>
            <person name="Tenaillon O."/>
            <person name="Barbe V."/>
            <person name="Baeriswyl S."/>
            <person name="Bidet P."/>
            <person name="Bingen E."/>
            <person name="Bonacorsi S."/>
            <person name="Bouchier C."/>
            <person name="Bouvet O."/>
            <person name="Calteau A."/>
            <person name="Chiapello H."/>
            <person name="Clermont O."/>
            <person name="Cruveiller S."/>
            <person name="Danchin A."/>
            <person name="Diard M."/>
            <person name="Dossat C."/>
            <person name="Karoui M.E."/>
            <person name="Frapy E."/>
            <person name="Garry L."/>
            <person name="Ghigo J.M."/>
            <person name="Gilles A.M."/>
            <person name="Johnson J."/>
            <person name="Le Bouguenec C."/>
            <person name="Lescat M."/>
            <person name="Mangenot S."/>
            <person name="Martinez-Jehanne V."/>
            <person name="Matic I."/>
            <person name="Nassif X."/>
            <person name="Oztas S."/>
            <person name="Petit M.A."/>
            <person name="Pichon C."/>
            <person name="Rouy Z."/>
            <person name="Ruf C.S."/>
            <person name="Schneider D."/>
            <person name="Tourret J."/>
            <person name="Vacherie B."/>
            <person name="Vallenet D."/>
            <person name="Medigue C."/>
            <person name="Rocha E.P.C."/>
            <person name="Denamur E."/>
        </authorList>
    </citation>
    <scope>NUCLEOTIDE SEQUENCE [LARGE SCALE GENOMIC DNA]</scope>
    <source>
        <strain>ED1a</strain>
    </source>
</reference>
<gene>
    <name evidence="1" type="primary">ispG</name>
    <name type="ordered locus">ECED1_2946</name>
</gene>
<comment type="function">
    <text evidence="1">Converts 2C-methyl-D-erythritol 2,4-cyclodiphosphate (ME-2,4cPP) into 1-hydroxy-2-methyl-2-(E)-butenyl 4-diphosphate.</text>
</comment>
<comment type="catalytic activity">
    <reaction evidence="1">
        <text>(2E)-4-hydroxy-3-methylbut-2-enyl diphosphate + oxidized [flavodoxin] + H2O + 2 H(+) = 2-C-methyl-D-erythritol 2,4-cyclic diphosphate + reduced [flavodoxin]</text>
        <dbReference type="Rhea" id="RHEA:43604"/>
        <dbReference type="Rhea" id="RHEA-COMP:10622"/>
        <dbReference type="Rhea" id="RHEA-COMP:10623"/>
        <dbReference type="ChEBI" id="CHEBI:15377"/>
        <dbReference type="ChEBI" id="CHEBI:15378"/>
        <dbReference type="ChEBI" id="CHEBI:57618"/>
        <dbReference type="ChEBI" id="CHEBI:58210"/>
        <dbReference type="ChEBI" id="CHEBI:58483"/>
        <dbReference type="ChEBI" id="CHEBI:128753"/>
        <dbReference type="EC" id="1.17.7.3"/>
    </reaction>
</comment>
<comment type="cofactor">
    <cofactor evidence="1">
        <name>[4Fe-4S] cluster</name>
        <dbReference type="ChEBI" id="CHEBI:49883"/>
    </cofactor>
    <text evidence="1">Binds 1 [4Fe-4S] cluster.</text>
</comment>
<comment type="pathway">
    <text evidence="1">Isoprenoid biosynthesis; isopentenyl diphosphate biosynthesis via DXP pathway; isopentenyl diphosphate from 1-deoxy-D-xylulose 5-phosphate: step 5/6.</text>
</comment>
<comment type="similarity">
    <text evidence="1">Belongs to the IspG family.</text>
</comment>
<proteinExistence type="inferred from homology"/>
<protein>
    <recommendedName>
        <fullName evidence="1">4-hydroxy-3-methylbut-2-en-1-yl diphosphate synthase (flavodoxin)</fullName>
        <ecNumber evidence="1">1.17.7.3</ecNumber>
    </recommendedName>
    <alternativeName>
        <fullName evidence="1">1-hydroxy-2-methyl-2-(E)-butenyl 4-diphosphate synthase</fullName>
    </alternativeName>
</protein>
<organism>
    <name type="scientific">Escherichia coli O81 (strain ED1a)</name>
    <dbReference type="NCBI Taxonomy" id="585397"/>
    <lineage>
        <taxon>Bacteria</taxon>
        <taxon>Pseudomonadati</taxon>
        <taxon>Pseudomonadota</taxon>
        <taxon>Gammaproteobacteria</taxon>
        <taxon>Enterobacterales</taxon>
        <taxon>Enterobacteriaceae</taxon>
        <taxon>Escherichia</taxon>
    </lineage>
</organism>
<feature type="chain" id="PRO_1000123446" description="4-hydroxy-3-methylbut-2-en-1-yl diphosphate synthase (flavodoxin)">
    <location>
        <begin position="1"/>
        <end position="372"/>
    </location>
</feature>
<feature type="binding site" evidence="1">
    <location>
        <position position="270"/>
    </location>
    <ligand>
        <name>[4Fe-4S] cluster</name>
        <dbReference type="ChEBI" id="CHEBI:49883"/>
    </ligand>
</feature>
<feature type="binding site" evidence="1">
    <location>
        <position position="273"/>
    </location>
    <ligand>
        <name>[4Fe-4S] cluster</name>
        <dbReference type="ChEBI" id="CHEBI:49883"/>
    </ligand>
</feature>
<feature type="binding site" evidence="1">
    <location>
        <position position="305"/>
    </location>
    <ligand>
        <name>[4Fe-4S] cluster</name>
        <dbReference type="ChEBI" id="CHEBI:49883"/>
    </ligand>
</feature>
<feature type="binding site" evidence="1">
    <location>
        <position position="312"/>
    </location>
    <ligand>
        <name>[4Fe-4S] cluster</name>
        <dbReference type="ChEBI" id="CHEBI:49883"/>
    </ligand>
</feature>
<sequence length="372" mass="40684">MHNQAPIQRRKSTRIYVGNVPIGDGAPIAVQSMTNTRTTDVEATVNQIKALERVGADIVRVSVPTMDAAEAFKLIKQQVNVPLVADIHFDYRIALKVAEYGVDCLRINPGNIGNEERIRMVVDCARDKNIPIRIGVNAGSLEKDLQEKYGEPTPQALLESAMRHVDHLDRLNFDQFKVSVKASDVFLAVESYRLLAKQIDQPLHLGITEAGGARSGAVKSAIGLGLLLSEGIGDTLRVSLAADPVEEIKVGFDILKSLRIRSRGINFIACPTCSRQEFDVIGTVNALEQRLEDIITPMDVSIIGCVVNGPGEALVSTLGVTGGNKKSGLYEDGVRKDRLDNNDMIDQLEARIRAKASQLDEARRIDVQQVEK</sequence>
<name>ISPG_ECO81</name>